<reference key="1">
    <citation type="journal article" date="1987" name="Virology">
        <title>Genetic divergence of the NS genes of avian influenza viruses.</title>
        <authorList>
            <person name="Nakajima K."/>
            <person name="Nobusawa E."/>
            <person name="Ogawa T."/>
            <person name="Nakajima S."/>
        </authorList>
    </citation>
    <scope>NUCLEOTIDE SEQUENCE [GENOMIC RNA]</scope>
</reference>
<sequence>NTVSSFQDILMRMSKMQLGTSSEDLNGMITQFESLKLYRDSLGEAVMRMGDLYSLPSRNGKWREQLSQKFEEIRWLIEEVRHRAKMTENSFEQITFMQALQLLLEVEQEIRTFSFQLI</sequence>
<feature type="chain" id="PRO_0000079009" description="Nuclear export protein">
    <location>
        <begin position="1" status="less than"/>
        <end position="118"/>
    </location>
</feature>
<feature type="short sequence motif" description="Nuclear export signal" evidence="1">
    <location>
        <begin position="9"/>
        <end position="18"/>
    </location>
</feature>
<feature type="short sequence motif" description="Nuclear export signal" evidence="1">
    <location>
        <begin position="82"/>
        <end position="91"/>
    </location>
</feature>
<feature type="non-terminal residue">
    <location>
        <position position="1"/>
    </location>
</feature>
<evidence type="ECO:0000250" key="1"/>
<evidence type="ECO:0000305" key="2"/>
<comment type="function">
    <text evidence="1">Mediates the nuclear export of encapsidated genomic RNAs (ribonucleoproteins, RNPs). Acts as an adapter between viral RNPs complexes and the nuclear export machinery of the cell. Possesses no intrinsic RNA-binding activity, but includes a C-terminal M1-binding domain. This domain is believed to allow recognition of RNPs to which the M1 protein is bound. Because the M1 protein is not available in large quantities until the later stages of infection, such an indirect recognition mechanism probably ensures that genomic RNPs are not exported from the nucleus before sufficient quantities of viral mRNA and progeny genomic RNA have been synthesized. Furthermore, the RNPs enters the cytoplasm only when they have associated with the M1 protein that is necessary to guide them to the plasma membrane. May down-regulate viral RNA synthesis when overproduced (By similarity).</text>
</comment>
<comment type="subunit">
    <text evidence="1">Binds M1 protein. May interact with human nucleoporin RAB/HRB and exportin XPO1/CRM1 (By similarity).</text>
</comment>
<comment type="subcellular location">
    <subcellularLocation>
        <location evidence="2">Virion</location>
    </subcellularLocation>
    <subcellularLocation>
        <location evidence="1">Host nucleus</location>
    </subcellularLocation>
</comment>
<comment type="alternative products">
    <event type="alternative splicing"/>
    <isoform>
        <id>P08279-1</id>
        <name>NEP</name>
        <name>NS2</name>
        <sequence type="displayed"/>
    </isoform>
    <isoform>
        <id>P08278-1</id>
        <name>NS1</name>
        <sequence type="external"/>
    </isoform>
</comment>
<comment type="miscellaneous">
    <text>Average number present in a viral particle is estimated to be 130-200 molecules.</text>
</comment>
<comment type="similarity">
    <text evidence="2">Belongs to the influenza viruses NEP family.</text>
</comment>
<proteinExistence type="inferred from homology"/>
<gene>
    <name type="primary">NS</name>
</gene>
<dbReference type="EMBL" id="M16564">
    <property type="protein sequence ID" value="AAA43573.1"/>
    <property type="molecule type" value="Genomic_RNA"/>
</dbReference>
<dbReference type="SMR" id="P08279"/>
<dbReference type="Proteomes" id="UP000101256">
    <property type="component" value="Genome"/>
</dbReference>
<dbReference type="GO" id="GO:0042025">
    <property type="term" value="C:host cell nucleus"/>
    <property type="evidence" value="ECO:0007669"/>
    <property type="project" value="UniProtKB-SubCell"/>
</dbReference>
<dbReference type="GO" id="GO:0044423">
    <property type="term" value="C:virion component"/>
    <property type="evidence" value="ECO:0007669"/>
    <property type="project" value="UniProtKB-KW"/>
</dbReference>
<dbReference type="GO" id="GO:0039675">
    <property type="term" value="P:exit of virus from host cell nucleus through nuclear pore"/>
    <property type="evidence" value="ECO:0007669"/>
    <property type="project" value="InterPro"/>
</dbReference>
<dbReference type="Gene3D" id="1.10.287.230">
    <property type="match status" value="1"/>
</dbReference>
<dbReference type="InterPro" id="IPR000968">
    <property type="entry name" value="Flu_NS2"/>
</dbReference>
<dbReference type="Pfam" id="PF00601">
    <property type="entry name" value="Flu_NS2"/>
    <property type="match status" value="1"/>
</dbReference>
<dbReference type="SUPFAM" id="SSF101156">
    <property type="entry name" value="Nonstructural protein ns2, Nep, M1-binding domain"/>
    <property type="match status" value="1"/>
</dbReference>
<keyword id="KW-0025">Alternative splicing</keyword>
<keyword id="KW-1048">Host nucleus</keyword>
<keyword id="KW-0945">Host-virus interaction</keyword>
<keyword id="KW-0813">Transport</keyword>
<keyword id="KW-0946">Virion</keyword>
<protein>
    <recommendedName>
        <fullName>Nuclear export protein</fullName>
        <shortName>NEP</shortName>
    </recommendedName>
    <alternativeName>
        <fullName>Non-structural protein 2</fullName>
        <shortName>NS2</shortName>
    </alternativeName>
</protein>
<name>NEP_I61A0</name>
<accession>P08279</accession>
<organism>
    <name type="scientific">Influenza A virus (strain A/Tern/South Africa/1961 H5N3)</name>
    <dbReference type="NCBI Taxonomy" id="384510"/>
    <lineage>
        <taxon>Viruses</taxon>
        <taxon>Riboviria</taxon>
        <taxon>Orthornavirae</taxon>
        <taxon>Negarnaviricota</taxon>
        <taxon>Polyploviricotina</taxon>
        <taxon>Insthoviricetes</taxon>
        <taxon>Articulavirales</taxon>
        <taxon>Orthomyxoviridae</taxon>
        <taxon>Alphainfluenzavirus</taxon>
        <taxon>Alphainfluenzavirus influenzae</taxon>
        <taxon>Influenza A virus</taxon>
    </lineage>
</organism>
<organismHost>
    <name type="scientific">Aves</name>
    <dbReference type="NCBI Taxonomy" id="8782"/>
</organismHost>